<gene>
    <name evidence="1" type="primary">rplJ</name>
    <name evidence="1" type="synonym">rpl10</name>
    <name type="ordered locus">cce_0224</name>
</gene>
<name>RL10_CROS5</name>
<protein>
    <recommendedName>
        <fullName evidence="1">Large ribosomal subunit protein uL10</fullName>
    </recommendedName>
    <alternativeName>
        <fullName evidence="2">50S ribosomal protein L10</fullName>
    </alternativeName>
</protein>
<keyword id="KW-1185">Reference proteome</keyword>
<keyword id="KW-0687">Ribonucleoprotein</keyword>
<keyword id="KW-0689">Ribosomal protein</keyword>
<keyword id="KW-0694">RNA-binding</keyword>
<keyword id="KW-0699">rRNA-binding</keyword>
<sequence length="188" mass="20097">MGRTRENKATVIADLKELLSEAQLGMVIDYQGLSVAEITELRNRLRPSGAICKVTKNTLMEQAITGDEAWEPMTNFLKGSSAFVLVKDDVGSAVRAYQSFKKDTKKTEFRGGVMQGQALNEDQVKAIADLPSKEELIGQVAGAINSIATKLAVGVNEVPTSIGRGINDIPNSLGRVMAAMAAKEEGNG</sequence>
<feature type="chain" id="PRO_1000195541" description="Large ribosomal subunit protein uL10">
    <location>
        <begin position="1"/>
        <end position="188"/>
    </location>
</feature>
<organism>
    <name type="scientific">Crocosphaera subtropica (strain ATCC 51142 / BH68)</name>
    <name type="common">Cyanothece sp. (strain ATCC 51142)</name>
    <dbReference type="NCBI Taxonomy" id="43989"/>
    <lineage>
        <taxon>Bacteria</taxon>
        <taxon>Bacillati</taxon>
        <taxon>Cyanobacteriota</taxon>
        <taxon>Cyanophyceae</taxon>
        <taxon>Oscillatoriophycideae</taxon>
        <taxon>Chroococcales</taxon>
        <taxon>Aphanothecaceae</taxon>
        <taxon>Crocosphaera</taxon>
        <taxon>Crocosphaera subtropica</taxon>
    </lineage>
</organism>
<comment type="function">
    <text evidence="1">Forms part of the ribosomal stalk, playing a central role in the interaction of the ribosome with GTP-bound translation factors.</text>
</comment>
<comment type="subunit">
    <text evidence="1">Part of the ribosomal stalk of the 50S ribosomal subunit. The N-terminus interacts with L11 and the large rRNA to form the base of the stalk. The C-terminus forms an elongated spine to which L12 dimers bind in a sequential fashion forming a multimeric L10(L12)X complex.</text>
</comment>
<comment type="similarity">
    <text evidence="1">Belongs to the universal ribosomal protein uL10 family.</text>
</comment>
<dbReference type="EMBL" id="CP000806">
    <property type="protein sequence ID" value="ACB49575.1"/>
    <property type="molecule type" value="Genomic_DNA"/>
</dbReference>
<dbReference type="RefSeq" id="WP_009546721.1">
    <property type="nucleotide sequence ID" value="NC_010546.1"/>
</dbReference>
<dbReference type="SMR" id="B1X074"/>
<dbReference type="STRING" id="43989.cce_0224"/>
<dbReference type="KEGG" id="cyt:cce_0224"/>
<dbReference type="eggNOG" id="COG0244">
    <property type="taxonomic scope" value="Bacteria"/>
</dbReference>
<dbReference type="HOGENOM" id="CLU_092227_1_1_3"/>
<dbReference type="OrthoDB" id="9808307at2"/>
<dbReference type="Proteomes" id="UP000001203">
    <property type="component" value="Chromosome circular"/>
</dbReference>
<dbReference type="GO" id="GO:0015934">
    <property type="term" value="C:large ribosomal subunit"/>
    <property type="evidence" value="ECO:0007669"/>
    <property type="project" value="InterPro"/>
</dbReference>
<dbReference type="GO" id="GO:0070180">
    <property type="term" value="F:large ribosomal subunit rRNA binding"/>
    <property type="evidence" value="ECO:0007669"/>
    <property type="project" value="UniProtKB-UniRule"/>
</dbReference>
<dbReference type="GO" id="GO:0003735">
    <property type="term" value="F:structural constituent of ribosome"/>
    <property type="evidence" value="ECO:0007669"/>
    <property type="project" value="InterPro"/>
</dbReference>
<dbReference type="GO" id="GO:0006412">
    <property type="term" value="P:translation"/>
    <property type="evidence" value="ECO:0007669"/>
    <property type="project" value="UniProtKB-UniRule"/>
</dbReference>
<dbReference type="CDD" id="cd05797">
    <property type="entry name" value="Ribosomal_L10"/>
    <property type="match status" value="1"/>
</dbReference>
<dbReference type="Gene3D" id="3.30.70.1730">
    <property type="match status" value="1"/>
</dbReference>
<dbReference type="Gene3D" id="6.10.250.290">
    <property type="match status" value="1"/>
</dbReference>
<dbReference type="HAMAP" id="MF_00362">
    <property type="entry name" value="Ribosomal_uL10"/>
    <property type="match status" value="1"/>
</dbReference>
<dbReference type="InterPro" id="IPR001790">
    <property type="entry name" value="Ribosomal_uL10"/>
</dbReference>
<dbReference type="InterPro" id="IPR043141">
    <property type="entry name" value="Ribosomal_uL10-like_sf"/>
</dbReference>
<dbReference type="InterPro" id="IPR022973">
    <property type="entry name" value="Ribosomal_uL10_bac"/>
</dbReference>
<dbReference type="InterPro" id="IPR047865">
    <property type="entry name" value="Ribosomal_uL10_bac_type"/>
</dbReference>
<dbReference type="InterPro" id="IPR002363">
    <property type="entry name" value="Ribosomal_uL10_CS_bac"/>
</dbReference>
<dbReference type="NCBIfam" id="NF000955">
    <property type="entry name" value="PRK00099.1-1"/>
    <property type="match status" value="1"/>
</dbReference>
<dbReference type="PANTHER" id="PTHR11560">
    <property type="entry name" value="39S RIBOSOMAL PROTEIN L10, MITOCHONDRIAL"/>
    <property type="match status" value="1"/>
</dbReference>
<dbReference type="Pfam" id="PF00466">
    <property type="entry name" value="Ribosomal_L10"/>
    <property type="match status" value="1"/>
</dbReference>
<dbReference type="SUPFAM" id="SSF160369">
    <property type="entry name" value="Ribosomal protein L10-like"/>
    <property type="match status" value="1"/>
</dbReference>
<dbReference type="PROSITE" id="PS01109">
    <property type="entry name" value="RIBOSOMAL_L10"/>
    <property type="match status" value="1"/>
</dbReference>
<accession>B1X074</accession>
<evidence type="ECO:0000255" key="1">
    <source>
        <dbReference type="HAMAP-Rule" id="MF_00362"/>
    </source>
</evidence>
<evidence type="ECO:0000305" key="2"/>
<reference key="1">
    <citation type="journal article" date="2008" name="Proc. Natl. Acad. Sci. U.S.A.">
        <title>The genome of Cyanothece 51142, a unicellular diazotrophic cyanobacterium important in the marine nitrogen cycle.</title>
        <authorList>
            <person name="Welsh E.A."/>
            <person name="Liberton M."/>
            <person name="Stoeckel J."/>
            <person name="Loh T."/>
            <person name="Elvitigala T."/>
            <person name="Wang C."/>
            <person name="Wollam A."/>
            <person name="Fulton R.S."/>
            <person name="Clifton S.W."/>
            <person name="Jacobs J.M."/>
            <person name="Aurora R."/>
            <person name="Ghosh B.K."/>
            <person name="Sherman L.A."/>
            <person name="Smith R.D."/>
            <person name="Wilson R.K."/>
            <person name="Pakrasi H.B."/>
        </authorList>
    </citation>
    <scope>NUCLEOTIDE SEQUENCE [LARGE SCALE GENOMIC DNA]</scope>
    <source>
        <strain>ATCC 51142 / BH68</strain>
    </source>
</reference>
<proteinExistence type="inferred from homology"/>